<gene>
    <name evidence="1" type="primary">gmk</name>
    <name type="ordered locus">NTHI2054</name>
</gene>
<keyword id="KW-0067">ATP-binding</keyword>
<keyword id="KW-0963">Cytoplasm</keyword>
<keyword id="KW-0418">Kinase</keyword>
<keyword id="KW-0547">Nucleotide-binding</keyword>
<keyword id="KW-0808">Transferase</keyword>
<feature type="chain" id="PRO_0000266332" description="Guanylate kinase">
    <location>
        <begin position="1"/>
        <end position="208"/>
    </location>
</feature>
<feature type="domain" description="Guanylate kinase-like" evidence="1">
    <location>
        <begin position="4"/>
        <end position="185"/>
    </location>
</feature>
<feature type="binding site" evidence="1">
    <location>
        <begin position="11"/>
        <end position="18"/>
    </location>
    <ligand>
        <name>ATP</name>
        <dbReference type="ChEBI" id="CHEBI:30616"/>
    </ligand>
</feature>
<organism>
    <name type="scientific">Haemophilus influenzae (strain 86-028NP)</name>
    <dbReference type="NCBI Taxonomy" id="281310"/>
    <lineage>
        <taxon>Bacteria</taxon>
        <taxon>Pseudomonadati</taxon>
        <taxon>Pseudomonadota</taxon>
        <taxon>Gammaproteobacteria</taxon>
        <taxon>Pasteurellales</taxon>
        <taxon>Pasteurellaceae</taxon>
        <taxon>Haemophilus</taxon>
    </lineage>
</organism>
<comment type="function">
    <text evidence="1">Essential for recycling GMP and indirectly, cGMP.</text>
</comment>
<comment type="catalytic activity">
    <reaction evidence="1">
        <text>GMP + ATP = GDP + ADP</text>
        <dbReference type="Rhea" id="RHEA:20780"/>
        <dbReference type="ChEBI" id="CHEBI:30616"/>
        <dbReference type="ChEBI" id="CHEBI:58115"/>
        <dbReference type="ChEBI" id="CHEBI:58189"/>
        <dbReference type="ChEBI" id="CHEBI:456216"/>
        <dbReference type="EC" id="2.7.4.8"/>
    </reaction>
</comment>
<comment type="subcellular location">
    <subcellularLocation>
        <location evidence="1">Cytoplasm</location>
    </subcellularLocation>
</comment>
<comment type="similarity">
    <text evidence="1">Belongs to the guanylate kinase family.</text>
</comment>
<evidence type="ECO:0000255" key="1">
    <source>
        <dbReference type="HAMAP-Rule" id="MF_00328"/>
    </source>
</evidence>
<sequence>MSQGNLYILSAPSGAGKSSLISALLASDSSTQKMVSVSHTTRAPRPGEVEGVHYYFVSKEEFESLIEQDLFLEYAKVFGGNYYGTSLPAIEENLAKGIDVFLDIDWQGAQQIRKKVPSVKSIFILPPSLPELERRLIGRGQDSEEVIAERMSKAISEISHYDEYDYVIVNDDFEKTLKDLQSILQSERLTKDYQQKQNAMLIQQLLAK</sequence>
<proteinExistence type="inferred from homology"/>
<name>KGUA_HAEI8</name>
<reference key="1">
    <citation type="journal article" date="2005" name="J. Bacteriol.">
        <title>Genomic sequence of an otitis media isolate of nontypeable Haemophilus influenzae: comparative study with H. influenzae serotype d, strain KW20.</title>
        <authorList>
            <person name="Harrison A."/>
            <person name="Dyer D.W."/>
            <person name="Gillaspy A."/>
            <person name="Ray W.C."/>
            <person name="Mungur R."/>
            <person name="Carson M.B."/>
            <person name="Zhong H."/>
            <person name="Gipson J."/>
            <person name="Gipson M."/>
            <person name="Johnson L.S."/>
            <person name="Lewis L."/>
            <person name="Bakaletz L.O."/>
            <person name="Munson R.S. Jr."/>
        </authorList>
    </citation>
    <scope>NUCLEOTIDE SEQUENCE [LARGE SCALE GENOMIC DNA]</scope>
    <source>
        <strain>86-028NP</strain>
    </source>
</reference>
<accession>Q4QJK3</accession>
<protein>
    <recommendedName>
        <fullName evidence="1">Guanylate kinase</fullName>
        <ecNumber evidence="1">2.7.4.8</ecNumber>
    </recommendedName>
    <alternativeName>
        <fullName evidence="1">GMP kinase</fullName>
    </alternativeName>
</protein>
<dbReference type="EC" id="2.7.4.8" evidence="1"/>
<dbReference type="EMBL" id="CP000057">
    <property type="protein sequence ID" value="AAX88794.1"/>
    <property type="molecule type" value="Genomic_DNA"/>
</dbReference>
<dbReference type="RefSeq" id="WP_005649899.1">
    <property type="nucleotide sequence ID" value="NC_007146.2"/>
</dbReference>
<dbReference type="SMR" id="Q4QJK3"/>
<dbReference type="GeneID" id="93220756"/>
<dbReference type="KEGG" id="hit:NTHI2054"/>
<dbReference type="HOGENOM" id="CLU_001715_1_0_6"/>
<dbReference type="Proteomes" id="UP000002525">
    <property type="component" value="Chromosome"/>
</dbReference>
<dbReference type="GO" id="GO:0005829">
    <property type="term" value="C:cytosol"/>
    <property type="evidence" value="ECO:0007669"/>
    <property type="project" value="TreeGrafter"/>
</dbReference>
<dbReference type="GO" id="GO:0005524">
    <property type="term" value="F:ATP binding"/>
    <property type="evidence" value="ECO:0007669"/>
    <property type="project" value="UniProtKB-UniRule"/>
</dbReference>
<dbReference type="GO" id="GO:0004385">
    <property type="term" value="F:guanylate kinase activity"/>
    <property type="evidence" value="ECO:0007669"/>
    <property type="project" value="UniProtKB-UniRule"/>
</dbReference>
<dbReference type="CDD" id="cd00071">
    <property type="entry name" value="GMPK"/>
    <property type="match status" value="1"/>
</dbReference>
<dbReference type="FunFam" id="3.40.50.300:FF:000855">
    <property type="entry name" value="Guanylate kinase"/>
    <property type="match status" value="1"/>
</dbReference>
<dbReference type="FunFam" id="3.30.63.10:FF:000002">
    <property type="entry name" value="Guanylate kinase 1"/>
    <property type="match status" value="1"/>
</dbReference>
<dbReference type="Gene3D" id="3.30.63.10">
    <property type="entry name" value="Guanylate Kinase phosphate binding domain"/>
    <property type="match status" value="1"/>
</dbReference>
<dbReference type="Gene3D" id="3.40.50.300">
    <property type="entry name" value="P-loop containing nucleotide triphosphate hydrolases"/>
    <property type="match status" value="2"/>
</dbReference>
<dbReference type="HAMAP" id="MF_00328">
    <property type="entry name" value="Guanylate_kinase"/>
    <property type="match status" value="1"/>
</dbReference>
<dbReference type="InterPro" id="IPR008145">
    <property type="entry name" value="GK/Ca_channel_bsu"/>
</dbReference>
<dbReference type="InterPro" id="IPR008144">
    <property type="entry name" value="Guanylate_kin-like_dom"/>
</dbReference>
<dbReference type="InterPro" id="IPR017665">
    <property type="entry name" value="Guanylate_kinase"/>
</dbReference>
<dbReference type="InterPro" id="IPR020590">
    <property type="entry name" value="Guanylate_kinase_CS"/>
</dbReference>
<dbReference type="InterPro" id="IPR027417">
    <property type="entry name" value="P-loop_NTPase"/>
</dbReference>
<dbReference type="NCBIfam" id="TIGR03263">
    <property type="entry name" value="guanyl_kin"/>
    <property type="match status" value="1"/>
</dbReference>
<dbReference type="PANTHER" id="PTHR23117:SF13">
    <property type="entry name" value="GUANYLATE KINASE"/>
    <property type="match status" value="1"/>
</dbReference>
<dbReference type="PANTHER" id="PTHR23117">
    <property type="entry name" value="GUANYLATE KINASE-RELATED"/>
    <property type="match status" value="1"/>
</dbReference>
<dbReference type="Pfam" id="PF00625">
    <property type="entry name" value="Guanylate_kin"/>
    <property type="match status" value="1"/>
</dbReference>
<dbReference type="SMART" id="SM00072">
    <property type="entry name" value="GuKc"/>
    <property type="match status" value="1"/>
</dbReference>
<dbReference type="SUPFAM" id="SSF52540">
    <property type="entry name" value="P-loop containing nucleoside triphosphate hydrolases"/>
    <property type="match status" value="1"/>
</dbReference>
<dbReference type="PROSITE" id="PS00856">
    <property type="entry name" value="GUANYLATE_KINASE_1"/>
    <property type="match status" value="1"/>
</dbReference>
<dbReference type="PROSITE" id="PS50052">
    <property type="entry name" value="GUANYLATE_KINASE_2"/>
    <property type="match status" value="1"/>
</dbReference>